<feature type="chain" id="PRO_1000137107" description="Ornithine carbamoyltransferase">
    <location>
        <begin position="1"/>
        <end position="338"/>
    </location>
</feature>
<feature type="binding site" evidence="2">
    <location>
        <begin position="58"/>
        <end position="61"/>
    </location>
    <ligand>
        <name>carbamoyl phosphate</name>
        <dbReference type="ChEBI" id="CHEBI:58228"/>
    </ligand>
</feature>
<feature type="binding site" evidence="2">
    <location>
        <position position="85"/>
    </location>
    <ligand>
        <name>carbamoyl phosphate</name>
        <dbReference type="ChEBI" id="CHEBI:58228"/>
    </ligand>
</feature>
<feature type="binding site" evidence="2">
    <location>
        <position position="109"/>
    </location>
    <ligand>
        <name>carbamoyl phosphate</name>
        <dbReference type="ChEBI" id="CHEBI:58228"/>
    </ligand>
</feature>
<feature type="binding site" evidence="2">
    <location>
        <begin position="136"/>
        <end position="139"/>
    </location>
    <ligand>
        <name>carbamoyl phosphate</name>
        <dbReference type="ChEBI" id="CHEBI:58228"/>
    </ligand>
</feature>
<feature type="binding site" evidence="2">
    <location>
        <position position="168"/>
    </location>
    <ligand>
        <name>L-ornithine</name>
        <dbReference type="ChEBI" id="CHEBI:46911"/>
    </ligand>
</feature>
<feature type="binding site" evidence="2">
    <location>
        <position position="232"/>
    </location>
    <ligand>
        <name>L-ornithine</name>
        <dbReference type="ChEBI" id="CHEBI:46911"/>
    </ligand>
</feature>
<feature type="binding site" evidence="2">
    <location>
        <begin position="236"/>
        <end position="237"/>
    </location>
    <ligand>
        <name>L-ornithine</name>
        <dbReference type="ChEBI" id="CHEBI:46911"/>
    </ligand>
</feature>
<feature type="binding site" evidence="2">
    <location>
        <begin position="273"/>
        <end position="274"/>
    </location>
    <ligand>
        <name>carbamoyl phosphate</name>
        <dbReference type="ChEBI" id="CHEBI:58228"/>
    </ligand>
</feature>
<feature type="binding site" evidence="2">
    <location>
        <position position="318"/>
    </location>
    <ligand>
        <name>carbamoyl phosphate</name>
        <dbReference type="ChEBI" id="CHEBI:58228"/>
    </ligand>
</feature>
<evidence type="ECO:0000250" key="1"/>
<evidence type="ECO:0000255" key="2">
    <source>
        <dbReference type="HAMAP-Rule" id="MF_01109"/>
    </source>
</evidence>
<gene>
    <name evidence="2" type="primary">arcB</name>
    <name type="ordered locus">SPCG_2119</name>
</gene>
<name>OTC_STRPS</name>
<dbReference type="EC" id="2.1.3.3" evidence="2"/>
<dbReference type="EMBL" id="CP001033">
    <property type="protein sequence ID" value="ACB91371.1"/>
    <property type="molecule type" value="Genomic_DNA"/>
</dbReference>
<dbReference type="SMR" id="B2INH0"/>
<dbReference type="KEGG" id="spw:SPCG_2119"/>
<dbReference type="HOGENOM" id="CLU_043846_3_1_9"/>
<dbReference type="UniPathway" id="UPA00254">
    <property type="reaction ID" value="UER00365"/>
</dbReference>
<dbReference type="GO" id="GO:0005737">
    <property type="term" value="C:cytoplasm"/>
    <property type="evidence" value="ECO:0007669"/>
    <property type="project" value="UniProtKB-SubCell"/>
</dbReference>
<dbReference type="GO" id="GO:0016597">
    <property type="term" value="F:amino acid binding"/>
    <property type="evidence" value="ECO:0007669"/>
    <property type="project" value="InterPro"/>
</dbReference>
<dbReference type="GO" id="GO:0004585">
    <property type="term" value="F:ornithine carbamoyltransferase activity"/>
    <property type="evidence" value="ECO:0007669"/>
    <property type="project" value="UniProtKB-UniRule"/>
</dbReference>
<dbReference type="GO" id="GO:0042450">
    <property type="term" value="P:arginine biosynthetic process via ornithine"/>
    <property type="evidence" value="ECO:0007669"/>
    <property type="project" value="TreeGrafter"/>
</dbReference>
<dbReference type="GO" id="GO:0019547">
    <property type="term" value="P:arginine catabolic process to ornithine"/>
    <property type="evidence" value="ECO:0007669"/>
    <property type="project" value="UniProtKB-UniRule"/>
</dbReference>
<dbReference type="GO" id="GO:0019240">
    <property type="term" value="P:citrulline biosynthetic process"/>
    <property type="evidence" value="ECO:0007669"/>
    <property type="project" value="TreeGrafter"/>
</dbReference>
<dbReference type="FunFam" id="3.40.50.1370:FF:000004">
    <property type="entry name" value="Ornithine carbamoyltransferase"/>
    <property type="match status" value="1"/>
</dbReference>
<dbReference type="Gene3D" id="3.40.50.1370">
    <property type="entry name" value="Aspartate/ornithine carbamoyltransferase"/>
    <property type="match status" value="2"/>
</dbReference>
<dbReference type="HAMAP" id="MF_01109">
    <property type="entry name" value="OTCase"/>
    <property type="match status" value="1"/>
</dbReference>
<dbReference type="InterPro" id="IPR006132">
    <property type="entry name" value="Asp/Orn_carbamoyltranf_P-bd"/>
</dbReference>
<dbReference type="InterPro" id="IPR006130">
    <property type="entry name" value="Asp/Orn_carbamoylTrfase"/>
</dbReference>
<dbReference type="InterPro" id="IPR036901">
    <property type="entry name" value="Asp/Orn_carbamoylTrfase_sf"/>
</dbReference>
<dbReference type="InterPro" id="IPR006131">
    <property type="entry name" value="Asp_carbamoyltransf_Asp/Orn-bd"/>
</dbReference>
<dbReference type="InterPro" id="IPR002292">
    <property type="entry name" value="Orn/put_carbamltrans"/>
</dbReference>
<dbReference type="InterPro" id="IPR024904">
    <property type="entry name" value="OTCase_ArgI"/>
</dbReference>
<dbReference type="NCBIfam" id="TIGR00658">
    <property type="entry name" value="orni_carb_tr"/>
    <property type="match status" value="1"/>
</dbReference>
<dbReference type="NCBIfam" id="NF001986">
    <property type="entry name" value="PRK00779.1"/>
    <property type="match status" value="1"/>
</dbReference>
<dbReference type="PANTHER" id="PTHR45753:SF1">
    <property type="entry name" value="ORNITHINE CARBAMOYLTRANSFERASE, CATABOLIC"/>
    <property type="match status" value="1"/>
</dbReference>
<dbReference type="PANTHER" id="PTHR45753">
    <property type="entry name" value="ORNITHINE CARBAMOYLTRANSFERASE, MITOCHONDRIAL"/>
    <property type="match status" value="1"/>
</dbReference>
<dbReference type="Pfam" id="PF00185">
    <property type="entry name" value="OTCace"/>
    <property type="match status" value="1"/>
</dbReference>
<dbReference type="Pfam" id="PF02729">
    <property type="entry name" value="OTCace_N"/>
    <property type="match status" value="1"/>
</dbReference>
<dbReference type="PRINTS" id="PR00100">
    <property type="entry name" value="AOTCASE"/>
</dbReference>
<dbReference type="PRINTS" id="PR00102">
    <property type="entry name" value="OTCASE"/>
</dbReference>
<dbReference type="SUPFAM" id="SSF53671">
    <property type="entry name" value="Aspartate/ornithine carbamoyltransferase"/>
    <property type="match status" value="1"/>
</dbReference>
<dbReference type="PROSITE" id="PS00097">
    <property type="entry name" value="CARBAMOYLTRANSFERASE"/>
    <property type="match status" value="1"/>
</dbReference>
<proteinExistence type="inferred from homology"/>
<accession>B2INH0</accession>
<sequence length="338" mass="37911">MTNSVFQGRSFLAEKDFTRAELEYLIGLSAHLKDLKKRNIQHHYLAGKNIALLFEKTSTRTRAAFTTAAIDLGAHPEYLGANDIQLGKKESTEDTAKVLGRMFDGIEFRGFSQRMVEELAEFSGVPVWNGLTDEWHPTQMLADYLTVQENFGRLEGLTLVYCGDGRNNVANSLLVTGAILGVNVHIFSPKELFPEKEIVELAEGFAKESGAHVLITEDADEAVKDADVLYTDVWVSMGEEDKFAERVALLKPYQVNMDLVKKAGNENLIFLHCLPAFHDTHTVYGKDVAEKFGVEEMEVTDEVFRSKYARHFDQAENRMHTIKAVMAATLGNLYIPKV</sequence>
<protein>
    <recommendedName>
        <fullName evidence="2">Ornithine carbamoyltransferase</fullName>
        <shortName evidence="2">OTCase</shortName>
        <ecNumber evidence="2">2.1.3.3</ecNumber>
    </recommendedName>
</protein>
<comment type="function">
    <text evidence="1">Reversibly catalyzes the transfer of the carbamoyl group from carbamoyl phosphate (CP) to the N(epsilon) atom of ornithine (ORN) to produce L-citrulline.</text>
</comment>
<comment type="catalytic activity">
    <reaction evidence="2">
        <text>carbamoyl phosphate + L-ornithine = L-citrulline + phosphate + H(+)</text>
        <dbReference type="Rhea" id="RHEA:19513"/>
        <dbReference type="ChEBI" id="CHEBI:15378"/>
        <dbReference type="ChEBI" id="CHEBI:43474"/>
        <dbReference type="ChEBI" id="CHEBI:46911"/>
        <dbReference type="ChEBI" id="CHEBI:57743"/>
        <dbReference type="ChEBI" id="CHEBI:58228"/>
        <dbReference type="EC" id="2.1.3.3"/>
    </reaction>
</comment>
<comment type="pathway">
    <text evidence="2">Amino-acid degradation; L-arginine degradation via ADI pathway; carbamoyl phosphate from L-arginine: step 2/2.</text>
</comment>
<comment type="subcellular location">
    <subcellularLocation>
        <location evidence="2">Cytoplasm</location>
    </subcellularLocation>
</comment>
<comment type="similarity">
    <text evidence="2">Belongs to the aspartate/ornithine carbamoyltransferase superfamily. OTCase family.</text>
</comment>
<keyword id="KW-0056">Arginine metabolism</keyword>
<keyword id="KW-0963">Cytoplasm</keyword>
<keyword id="KW-0808">Transferase</keyword>
<organism>
    <name type="scientific">Streptococcus pneumoniae (strain CGSP14)</name>
    <dbReference type="NCBI Taxonomy" id="516950"/>
    <lineage>
        <taxon>Bacteria</taxon>
        <taxon>Bacillati</taxon>
        <taxon>Bacillota</taxon>
        <taxon>Bacilli</taxon>
        <taxon>Lactobacillales</taxon>
        <taxon>Streptococcaceae</taxon>
        <taxon>Streptococcus</taxon>
    </lineage>
</organism>
<reference key="1">
    <citation type="journal article" date="2009" name="BMC Genomics">
        <title>Genome evolution driven by host adaptations results in a more virulent and antimicrobial-resistant Streptococcus pneumoniae serotype 14.</title>
        <authorList>
            <person name="Ding F."/>
            <person name="Tang P."/>
            <person name="Hsu M.-H."/>
            <person name="Cui P."/>
            <person name="Hu S."/>
            <person name="Yu J."/>
            <person name="Chiu C.-H."/>
        </authorList>
    </citation>
    <scope>NUCLEOTIDE SEQUENCE [LARGE SCALE GENOMIC DNA]</scope>
    <source>
        <strain>CGSP14</strain>
    </source>
</reference>